<accession>A1WN86</accession>
<name>SYE_VEREI</name>
<proteinExistence type="inferred from homology"/>
<dbReference type="EC" id="6.1.1.17" evidence="1"/>
<dbReference type="EMBL" id="CP000542">
    <property type="protein sequence ID" value="ABM59093.1"/>
    <property type="molecule type" value="Genomic_DNA"/>
</dbReference>
<dbReference type="RefSeq" id="WP_011811085.1">
    <property type="nucleotide sequence ID" value="NC_008786.1"/>
</dbReference>
<dbReference type="SMR" id="A1WN86"/>
<dbReference type="STRING" id="391735.Veis_3370"/>
<dbReference type="GeneID" id="76461803"/>
<dbReference type="KEGG" id="vei:Veis_3370"/>
<dbReference type="eggNOG" id="COG0008">
    <property type="taxonomic scope" value="Bacteria"/>
</dbReference>
<dbReference type="HOGENOM" id="CLU_015768_6_0_4"/>
<dbReference type="OrthoDB" id="9807503at2"/>
<dbReference type="Proteomes" id="UP000000374">
    <property type="component" value="Chromosome"/>
</dbReference>
<dbReference type="GO" id="GO:0005829">
    <property type="term" value="C:cytosol"/>
    <property type="evidence" value="ECO:0007669"/>
    <property type="project" value="TreeGrafter"/>
</dbReference>
<dbReference type="GO" id="GO:0005524">
    <property type="term" value="F:ATP binding"/>
    <property type="evidence" value="ECO:0007669"/>
    <property type="project" value="UniProtKB-UniRule"/>
</dbReference>
<dbReference type="GO" id="GO:0004818">
    <property type="term" value="F:glutamate-tRNA ligase activity"/>
    <property type="evidence" value="ECO:0007669"/>
    <property type="project" value="UniProtKB-UniRule"/>
</dbReference>
<dbReference type="GO" id="GO:0000049">
    <property type="term" value="F:tRNA binding"/>
    <property type="evidence" value="ECO:0007669"/>
    <property type="project" value="InterPro"/>
</dbReference>
<dbReference type="GO" id="GO:0008270">
    <property type="term" value="F:zinc ion binding"/>
    <property type="evidence" value="ECO:0007669"/>
    <property type="project" value="InterPro"/>
</dbReference>
<dbReference type="GO" id="GO:0006424">
    <property type="term" value="P:glutamyl-tRNA aminoacylation"/>
    <property type="evidence" value="ECO:0007669"/>
    <property type="project" value="UniProtKB-UniRule"/>
</dbReference>
<dbReference type="CDD" id="cd00808">
    <property type="entry name" value="GluRS_core"/>
    <property type="match status" value="1"/>
</dbReference>
<dbReference type="FunFam" id="3.40.50.620:FF:000007">
    <property type="entry name" value="Glutamate--tRNA ligase"/>
    <property type="match status" value="1"/>
</dbReference>
<dbReference type="Gene3D" id="1.10.10.350">
    <property type="match status" value="1"/>
</dbReference>
<dbReference type="Gene3D" id="3.40.50.620">
    <property type="entry name" value="HUPs"/>
    <property type="match status" value="1"/>
</dbReference>
<dbReference type="HAMAP" id="MF_00022">
    <property type="entry name" value="Glu_tRNA_synth_type1"/>
    <property type="match status" value="1"/>
</dbReference>
<dbReference type="InterPro" id="IPR045462">
    <property type="entry name" value="aa-tRNA-synth_I_cd-bd"/>
</dbReference>
<dbReference type="InterPro" id="IPR020751">
    <property type="entry name" value="aa-tRNA-synth_I_codon-bd_sub2"/>
</dbReference>
<dbReference type="InterPro" id="IPR001412">
    <property type="entry name" value="aa-tRNA-synth_I_CS"/>
</dbReference>
<dbReference type="InterPro" id="IPR008925">
    <property type="entry name" value="aa_tRNA-synth_I_cd-bd_sf"/>
</dbReference>
<dbReference type="InterPro" id="IPR004527">
    <property type="entry name" value="Glu-tRNA-ligase_bac/mito"/>
</dbReference>
<dbReference type="InterPro" id="IPR000924">
    <property type="entry name" value="Glu/Gln-tRNA-synth"/>
</dbReference>
<dbReference type="InterPro" id="IPR020058">
    <property type="entry name" value="Glu/Gln-tRNA-synth_Ib_cat-dom"/>
</dbReference>
<dbReference type="InterPro" id="IPR049940">
    <property type="entry name" value="GluQ/Sye"/>
</dbReference>
<dbReference type="InterPro" id="IPR033910">
    <property type="entry name" value="GluRS_core"/>
</dbReference>
<dbReference type="InterPro" id="IPR014729">
    <property type="entry name" value="Rossmann-like_a/b/a_fold"/>
</dbReference>
<dbReference type="NCBIfam" id="TIGR00464">
    <property type="entry name" value="gltX_bact"/>
    <property type="match status" value="1"/>
</dbReference>
<dbReference type="PANTHER" id="PTHR43311">
    <property type="entry name" value="GLUTAMATE--TRNA LIGASE"/>
    <property type="match status" value="1"/>
</dbReference>
<dbReference type="PANTHER" id="PTHR43311:SF2">
    <property type="entry name" value="GLUTAMATE--TRNA LIGASE, MITOCHONDRIAL-RELATED"/>
    <property type="match status" value="1"/>
</dbReference>
<dbReference type="Pfam" id="PF19269">
    <property type="entry name" value="Anticodon_2"/>
    <property type="match status" value="1"/>
</dbReference>
<dbReference type="Pfam" id="PF00749">
    <property type="entry name" value="tRNA-synt_1c"/>
    <property type="match status" value="1"/>
</dbReference>
<dbReference type="PRINTS" id="PR00987">
    <property type="entry name" value="TRNASYNTHGLU"/>
</dbReference>
<dbReference type="SUPFAM" id="SSF48163">
    <property type="entry name" value="An anticodon-binding domain of class I aminoacyl-tRNA synthetases"/>
    <property type="match status" value="1"/>
</dbReference>
<dbReference type="SUPFAM" id="SSF52374">
    <property type="entry name" value="Nucleotidylyl transferase"/>
    <property type="match status" value="1"/>
</dbReference>
<dbReference type="PROSITE" id="PS00178">
    <property type="entry name" value="AA_TRNA_LIGASE_I"/>
    <property type="match status" value="1"/>
</dbReference>
<comment type="function">
    <text evidence="1">Catalyzes the attachment of glutamate to tRNA(Glu) in a two-step reaction: glutamate is first activated by ATP to form Glu-AMP and then transferred to the acceptor end of tRNA(Glu).</text>
</comment>
<comment type="catalytic activity">
    <reaction evidence="1">
        <text>tRNA(Glu) + L-glutamate + ATP = L-glutamyl-tRNA(Glu) + AMP + diphosphate</text>
        <dbReference type="Rhea" id="RHEA:23540"/>
        <dbReference type="Rhea" id="RHEA-COMP:9663"/>
        <dbReference type="Rhea" id="RHEA-COMP:9680"/>
        <dbReference type="ChEBI" id="CHEBI:29985"/>
        <dbReference type="ChEBI" id="CHEBI:30616"/>
        <dbReference type="ChEBI" id="CHEBI:33019"/>
        <dbReference type="ChEBI" id="CHEBI:78442"/>
        <dbReference type="ChEBI" id="CHEBI:78520"/>
        <dbReference type="ChEBI" id="CHEBI:456215"/>
        <dbReference type="EC" id="6.1.1.17"/>
    </reaction>
</comment>
<comment type="subunit">
    <text evidence="1">Monomer.</text>
</comment>
<comment type="subcellular location">
    <subcellularLocation>
        <location evidence="1">Cytoplasm</location>
    </subcellularLocation>
</comment>
<comment type="similarity">
    <text evidence="1">Belongs to the class-I aminoacyl-tRNA synthetase family. Glutamate--tRNA ligase type 1 subfamily.</text>
</comment>
<reference key="1">
    <citation type="submission" date="2006-12" db="EMBL/GenBank/DDBJ databases">
        <title>Complete sequence of chromosome 1 of Verminephrobacter eiseniae EF01-2.</title>
        <authorList>
            <person name="Copeland A."/>
            <person name="Lucas S."/>
            <person name="Lapidus A."/>
            <person name="Barry K."/>
            <person name="Detter J.C."/>
            <person name="Glavina del Rio T."/>
            <person name="Dalin E."/>
            <person name="Tice H."/>
            <person name="Pitluck S."/>
            <person name="Chertkov O."/>
            <person name="Brettin T."/>
            <person name="Bruce D."/>
            <person name="Han C."/>
            <person name="Tapia R."/>
            <person name="Gilna P."/>
            <person name="Schmutz J."/>
            <person name="Larimer F."/>
            <person name="Land M."/>
            <person name="Hauser L."/>
            <person name="Kyrpides N."/>
            <person name="Kim E."/>
            <person name="Stahl D."/>
            <person name="Richardson P."/>
        </authorList>
    </citation>
    <scope>NUCLEOTIDE SEQUENCE [LARGE SCALE GENOMIC DNA]</scope>
    <source>
        <strain>EF01-2</strain>
    </source>
</reference>
<gene>
    <name evidence="1" type="primary">gltX</name>
    <name type="ordered locus">Veis_3370</name>
</gene>
<evidence type="ECO:0000255" key="1">
    <source>
        <dbReference type="HAMAP-Rule" id="MF_00022"/>
    </source>
</evidence>
<evidence type="ECO:0000256" key="2">
    <source>
        <dbReference type="SAM" id="MobiDB-lite"/>
    </source>
</evidence>
<sequence length="477" mass="52969">MTDTTASGTARVRTRFAPSPTGFIHLGNIRSALYPWAFARAMGGDFILRIEDTDQQRSSQAALDVILESMQWLGMEPDEGPFHQMQRMERYRAVLAQLQAAGHAYPCYMSVAELDALREKQLAAKEKPRYDGSWRPEPGKTLPPVPAGMSPVLRFRNPQGGVVAWDDKVKGRIEIRNDELDDLVLARPDGTPTYNFCVVVDDIDMAITHVIRGDDHVNNTPRQINIFHALGKEPPVYAHLPTVLNEQGEKLSKRHGAKPVTQYRDEGYLPDAMINYLARLGWSHGDDEIFSRAQFLQWFNLDHLGRSAAQFDEAKLRWINAQHLKAMADDALAALVAAQLQRRGVAQQELANGLANGRLARICALFKDRCDTTVALANWAQVFYADVTPAETERALHVTEAIAPALDALADALSGCEWNRPAIAAAFKQVLASQGLKMPQLAMPTRVLTVGTAHTPSVDALLELMGREKVLARLRNR</sequence>
<protein>
    <recommendedName>
        <fullName evidence="1">Glutamate--tRNA ligase</fullName>
        <ecNumber evidence="1">6.1.1.17</ecNumber>
    </recommendedName>
    <alternativeName>
        <fullName evidence="1">Glutamyl-tRNA synthetase</fullName>
        <shortName evidence="1">GluRS</shortName>
    </alternativeName>
</protein>
<organism>
    <name type="scientific">Verminephrobacter eiseniae (strain EF01-2)</name>
    <dbReference type="NCBI Taxonomy" id="391735"/>
    <lineage>
        <taxon>Bacteria</taxon>
        <taxon>Pseudomonadati</taxon>
        <taxon>Pseudomonadota</taxon>
        <taxon>Betaproteobacteria</taxon>
        <taxon>Burkholderiales</taxon>
        <taxon>Comamonadaceae</taxon>
        <taxon>Verminephrobacter</taxon>
    </lineage>
</organism>
<keyword id="KW-0030">Aminoacyl-tRNA synthetase</keyword>
<keyword id="KW-0067">ATP-binding</keyword>
<keyword id="KW-0963">Cytoplasm</keyword>
<keyword id="KW-0436">Ligase</keyword>
<keyword id="KW-0547">Nucleotide-binding</keyword>
<keyword id="KW-0648">Protein biosynthesis</keyword>
<keyword id="KW-1185">Reference proteome</keyword>
<feature type="chain" id="PRO_0000331001" description="Glutamate--tRNA ligase">
    <location>
        <begin position="1"/>
        <end position="477"/>
    </location>
</feature>
<feature type="region of interest" description="Disordered" evidence="2">
    <location>
        <begin position="128"/>
        <end position="151"/>
    </location>
</feature>
<feature type="short sequence motif" description="'HIGH' region" evidence="1">
    <location>
        <begin position="18"/>
        <end position="28"/>
    </location>
</feature>
<feature type="short sequence motif" description="'KMSKS' region" evidence="1">
    <location>
        <begin position="250"/>
        <end position="254"/>
    </location>
</feature>
<feature type="compositionally biased region" description="Basic and acidic residues" evidence="2">
    <location>
        <begin position="128"/>
        <end position="138"/>
    </location>
</feature>
<feature type="binding site" evidence="1">
    <location>
        <position position="253"/>
    </location>
    <ligand>
        <name>ATP</name>
        <dbReference type="ChEBI" id="CHEBI:30616"/>
    </ligand>
</feature>